<name>IFNA8_HUMAN</name>
<keyword id="KW-0002">3D-structure</keyword>
<keyword id="KW-0051">Antiviral defense</keyword>
<keyword id="KW-0202">Cytokine</keyword>
<keyword id="KW-0903">Direct protein sequencing</keyword>
<keyword id="KW-1015">Disulfide bond</keyword>
<keyword id="KW-1267">Proteomics identification</keyword>
<keyword id="KW-1185">Reference proteome</keyword>
<keyword id="KW-0964">Secreted</keyword>
<keyword id="KW-0732">Signal</keyword>
<accession>P32881</accession>
<accession>P01565</accession>
<accession>P09236</accession>
<accession>Q5VWV7</accession>
<accession>Q5VYQ3</accession>
<reference key="1">
    <citation type="journal article" date="1985" name="J. Mol. Biol.">
        <title>Structural relationship of human interferon alpha genes and pseudogenes.</title>
        <authorList>
            <person name="Henco K."/>
            <person name="Brosius J."/>
            <person name="Fujisawa A."/>
            <person name="Fujisawa J."/>
            <person name="Haynes J.R."/>
            <person name="Hochstadt J."/>
            <person name="Kovacic T."/>
            <person name="Pasek M."/>
            <person name="Schamboeck A."/>
            <person name="Schmid J."/>
            <person name="Todokoro K."/>
            <person name="Waelchli M."/>
            <person name="Nagata S."/>
            <person name="Weissmann C."/>
        </authorList>
    </citation>
    <scope>NUCLEOTIDE SEQUENCE [GENOMIC DNA]</scope>
</reference>
<reference key="2">
    <citation type="journal article" date="1984" name="Gene">
        <title>Cloning of eukaryotic genes in single-strand phage vectors: the human interferon genes.</title>
        <authorList>
            <person name="Bowden D.W."/>
            <person name="Mao J."/>
            <person name="Gill T."/>
            <person name="Hsiao K."/>
            <person name="Lillquist J.S."/>
            <person name="Testa D."/>
            <person name="Vovis G.F."/>
        </authorList>
    </citation>
    <scope>NUCLEOTIDE SEQUENCE [MRNA]</scope>
</reference>
<reference key="3">
    <citation type="journal article" date="1981" name="Nucleic Acids Res.">
        <title>Bacterial synthesis of a novel human leukocyte interferon.</title>
        <authorList>
            <person name="Yelverton E."/>
            <person name="Leung D."/>
            <person name="Weck P."/>
            <person name="Gray P.W."/>
            <person name="Goeddel D.V."/>
        </authorList>
    </citation>
    <scope>NUCLEOTIDE SEQUENCE [MRNA]</scope>
</reference>
<reference key="4">
    <citation type="journal article" date="1981" name="Nature">
        <title>The structure of eight distinct cloned human leukocyte interferon cDNAs.</title>
        <authorList>
            <person name="Goeddel D.V."/>
            <person name="Leung D.W."/>
            <person name="Dull T.J."/>
            <person name="Gross M."/>
            <person name="Lawn R.M."/>
            <person name="McCandliss R."/>
            <person name="Seeburg P.H."/>
            <person name="Ullrich A."/>
            <person name="Yelverton E."/>
            <person name="Gray P.W."/>
        </authorList>
    </citation>
    <scope>NUCLEOTIDE SEQUENCE [MRNA]</scope>
</reference>
<reference key="5">
    <citation type="journal article" date="2004" name="Nature">
        <title>DNA sequence and analysis of human chromosome 9.</title>
        <authorList>
            <person name="Humphray S.J."/>
            <person name="Oliver K."/>
            <person name="Hunt A.R."/>
            <person name="Plumb R.W."/>
            <person name="Loveland J.E."/>
            <person name="Howe K.L."/>
            <person name="Andrews T.D."/>
            <person name="Searle S."/>
            <person name="Hunt S.E."/>
            <person name="Scott C.E."/>
            <person name="Jones M.C."/>
            <person name="Ainscough R."/>
            <person name="Almeida J.P."/>
            <person name="Ambrose K.D."/>
            <person name="Ashwell R.I.S."/>
            <person name="Babbage A.K."/>
            <person name="Babbage S."/>
            <person name="Bagguley C.L."/>
            <person name="Bailey J."/>
            <person name="Banerjee R."/>
            <person name="Barker D.J."/>
            <person name="Barlow K.F."/>
            <person name="Bates K."/>
            <person name="Beasley H."/>
            <person name="Beasley O."/>
            <person name="Bird C.P."/>
            <person name="Bray-Allen S."/>
            <person name="Brown A.J."/>
            <person name="Brown J.Y."/>
            <person name="Burford D."/>
            <person name="Burrill W."/>
            <person name="Burton J."/>
            <person name="Carder C."/>
            <person name="Carter N.P."/>
            <person name="Chapman J.C."/>
            <person name="Chen Y."/>
            <person name="Clarke G."/>
            <person name="Clark S.Y."/>
            <person name="Clee C.M."/>
            <person name="Clegg S."/>
            <person name="Collier R.E."/>
            <person name="Corby N."/>
            <person name="Crosier M."/>
            <person name="Cummings A.T."/>
            <person name="Davies J."/>
            <person name="Dhami P."/>
            <person name="Dunn M."/>
            <person name="Dutta I."/>
            <person name="Dyer L.W."/>
            <person name="Earthrowl M.E."/>
            <person name="Faulkner L."/>
            <person name="Fleming C.J."/>
            <person name="Frankish A."/>
            <person name="Frankland J.A."/>
            <person name="French L."/>
            <person name="Fricker D.G."/>
            <person name="Garner P."/>
            <person name="Garnett J."/>
            <person name="Ghori J."/>
            <person name="Gilbert J.G.R."/>
            <person name="Glison C."/>
            <person name="Grafham D.V."/>
            <person name="Gribble S."/>
            <person name="Griffiths C."/>
            <person name="Griffiths-Jones S."/>
            <person name="Grocock R."/>
            <person name="Guy J."/>
            <person name="Hall R.E."/>
            <person name="Hammond S."/>
            <person name="Harley J.L."/>
            <person name="Harrison E.S.I."/>
            <person name="Hart E.A."/>
            <person name="Heath P.D."/>
            <person name="Henderson C.D."/>
            <person name="Hopkins B.L."/>
            <person name="Howard P.J."/>
            <person name="Howden P.J."/>
            <person name="Huckle E."/>
            <person name="Johnson C."/>
            <person name="Johnson D."/>
            <person name="Joy A.A."/>
            <person name="Kay M."/>
            <person name="Keenan S."/>
            <person name="Kershaw J.K."/>
            <person name="Kimberley A.M."/>
            <person name="King A."/>
            <person name="Knights A."/>
            <person name="Laird G.K."/>
            <person name="Langford C."/>
            <person name="Lawlor S."/>
            <person name="Leongamornlert D.A."/>
            <person name="Leversha M."/>
            <person name="Lloyd C."/>
            <person name="Lloyd D.M."/>
            <person name="Lovell J."/>
            <person name="Martin S."/>
            <person name="Mashreghi-Mohammadi M."/>
            <person name="Matthews L."/>
            <person name="McLaren S."/>
            <person name="McLay K.E."/>
            <person name="McMurray A."/>
            <person name="Milne S."/>
            <person name="Nickerson T."/>
            <person name="Nisbett J."/>
            <person name="Nordsiek G."/>
            <person name="Pearce A.V."/>
            <person name="Peck A.I."/>
            <person name="Porter K.M."/>
            <person name="Pandian R."/>
            <person name="Pelan S."/>
            <person name="Phillimore B."/>
            <person name="Povey S."/>
            <person name="Ramsey Y."/>
            <person name="Rand V."/>
            <person name="Scharfe M."/>
            <person name="Sehra H.K."/>
            <person name="Shownkeen R."/>
            <person name="Sims S.K."/>
            <person name="Skuce C.D."/>
            <person name="Smith M."/>
            <person name="Steward C.A."/>
            <person name="Swarbreck D."/>
            <person name="Sycamore N."/>
            <person name="Tester J."/>
            <person name="Thorpe A."/>
            <person name="Tracey A."/>
            <person name="Tromans A."/>
            <person name="Thomas D.W."/>
            <person name="Wall M."/>
            <person name="Wallis J.M."/>
            <person name="West A.P."/>
            <person name="Whitehead S.L."/>
            <person name="Willey D.L."/>
            <person name="Williams S.A."/>
            <person name="Wilming L."/>
            <person name="Wray P.W."/>
            <person name="Young L."/>
            <person name="Ashurst J.L."/>
            <person name="Coulson A."/>
            <person name="Blocker H."/>
            <person name="Durbin R.M."/>
            <person name="Sulston J.E."/>
            <person name="Hubbard T."/>
            <person name="Jackson M.J."/>
            <person name="Bentley D.R."/>
            <person name="Beck S."/>
            <person name="Rogers J."/>
            <person name="Dunham I."/>
        </authorList>
    </citation>
    <scope>NUCLEOTIDE SEQUENCE [LARGE SCALE GENOMIC DNA]</scope>
</reference>
<reference key="6">
    <citation type="submission" date="2005-07" db="EMBL/GenBank/DDBJ databases">
        <authorList>
            <person name="Mural R.J."/>
            <person name="Istrail S."/>
            <person name="Sutton G.G."/>
            <person name="Florea L."/>
            <person name="Halpern A.L."/>
            <person name="Mobarry C.M."/>
            <person name="Lippert R."/>
            <person name="Walenz B."/>
            <person name="Shatkay H."/>
            <person name="Dew I."/>
            <person name="Miller J.R."/>
            <person name="Flanigan M.J."/>
            <person name="Edwards N.J."/>
            <person name="Bolanos R."/>
            <person name="Fasulo D."/>
            <person name="Halldorsson B.V."/>
            <person name="Hannenhalli S."/>
            <person name="Turner R."/>
            <person name="Yooseph S."/>
            <person name="Lu F."/>
            <person name="Nusskern D.R."/>
            <person name="Shue B.C."/>
            <person name="Zheng X.H."/>
            <person name="Zhong F."/>
            <person name="Delcher A.L."/>
            <person name="Huson D.H."/>
            <person name="Kravitz S.A."/>
            <person name="Mouchard L."/>
            <person name="Reinert K."/>
            <person name="Remington K.A."/>
            <person name="Clark A.G."/>
            <person name="Waterman M.S."/>
            <person name="Eichler E.E."/>
            <person name="Adams M.D."/>
            <person name="Hunkapiller M.W."/>
            <person name="Myers E.W."/>
            <person name="Venter J.C."/>
        </authorList>
    </citation>
    <scope>NUCLEOTIDE SEQUENCE [LARGE SCALE GENOMIC DNA]</scope>
</reference>
<reference key="7">
    <citation type="journal article" date="2004" name="Genome Res.">
        <title>The status, quality, and expansion of the NIH full-length cDNA project: the Mammalian Gene Collection (MGC).</title>
        <authorList>
            <consortium name="The MGC Project Team"/>
        </authorList>
    </citation>
    <scope>NUCLEOTIDE SEQUENCE [LARGE SCALE MRNA]</scope>
</reference>
<reference key="8">
    <citation type="journal article" date="1998" name="Biochem. J.">
        <title>Identification of nine interferon-alpha subtypes produced by Sendai virus-induced human peripheral blood leucocytes.</title>
        <authorList>
            <person name="Nyman T.A."/>
            <person name="Toeloe H."/>
            <person name="Parkkinen J."/>
            <person name="Kalkkinen N."/>
        </authorList>
    </citation>
    <scope>PROTEIN SEQUENCE OF 24-53</scope>
</reference>
<reference key="9">
    <citation type="journal article" date="1996" name="J. Interferon Cytokine Res.">
        <title>Interferon-alpha 8b is the only variant of interferon-alpha 8 identified in a large human population.</title>
        <authorList>
            <person name="Hussain M."/>
            <person name="Gill D.S."/>
            <person name="Liao M.-J."/>
            <person name="Testa D."/>
        </authorList>
    </citation>
    <scope>ABSENCE OF POLYMORPHISM</scope>
</reference>
<evidence type="ECO:0000250" key="1"/>
<evidence type="ECO:0000269" key="2">
    <source>
    </source>
</evidence>
<evidence type="ECO:0000305" key="3"/>
<evidence type="ECO:0007829" key="4">
    <source>
        <dbReference type="PDB" id="6JHD"/>
    </source>
</evidence>
<sequence length="189" mass="21989">MALTFYLLVALVVLSYKSFSSLGCDLPQTHSLGNRRALILLAQMRRISPFSCLKDRHDFEFPQEEFDDKQFQKAQAISVLHEMIQQTFNLFSTKDSSAALDETLLDEFYIELDQQLNDLESCVMQEVGVIESPLMYEDSILAVRKYFQRITLYLTEKKYSSCAWEVVRAEIMRSFSLSINLQKRLKSKE</sequence>
<comment type="function">
    <text>Produced by macrophages, IFN-alpha have antiviral activities. Interferon stimulates the production of two enzymes: a protein kinase and an oligoadenylate synthetase.</text>
</comment>
<comment type="interaction">
    <interactant intactId="EBI-18211524">
        <id>P32881</id>
    </interactant>
    <interactant intactId="EBI-13345167">
        <id>Q8TDT2</id>
        <label>GPR152</label>
    </interactant>
    <organismsDiffer>false</organismsDiffer>
    <experiments>3</experiments>
</comment>
<comment type="subcellular location">
    <subcellularLocation>
        <location>Secreted</location>
    </subcellularLocation>
</comment>
<comment type="similarity">
    <text evidence="3">Belongs to the alpha/beta interferon family.</text>
</comment>
<feature type="signal peptide" evidence="2">
    <location>
        <begin position="1"/>
        <end position="23"/>
    </location>
</feature>
<feature type="chain" id="PRO_0000016365" description="Interferon alpha-8">
    <location>
        <begin position="24"/>
        <end position="189"/>
    </location>
</feature>
<feature type="disulfide bond" evidence="1">
    <location>
        <begin position="24"/>
        <end position="122"/>
    </location>
</feature>
<feature type="disulfide bond" evidence="1">
    <location>
        <begin position="52"/>
        <end position="162"/>
    </location>
</feature>
<feature type="sequence variant" id="VAR_021975" description="In dbSNP:rs3739630.">
    <original>E</original>
    <variation>K</variation>
    <location>
        <position position="137"/>
    </location>
</feature>
<feature type="sequence conflict" description="In Ref. 3; CAA23806 and 4; CAA23811." evidence="3" ref="3 4">
    <original>L</original>
    <variation>M</variation>
    <location>
        <position position="8"/>
    </location>
</feature>
<feature type="sequence conflict" description="In Ref. 3; CAA23806 and 4; CAA23811." evidence="3" ref="3 4">
    <original>SCVM</original>
    <variation>VLCD</variation>
    <location>
        <begin position="121"/>
        <end position="124"/>
    </location>
</feature>
<feature type="strand" evidence="4">
    <location>
        <begin position="27"/>
        <end position="29"/>
    </location>
</feature>
<feature type="helix" evidence="4">
    <location>
        <begin position="38"/>
        <end position="42"/>
    </location>
</feature>
<feature type="helix" evidence="4">
    <location>
        <begin position="49"/>
        <end position="51"/>
    </location>
</feature>
<feature type="helix" evidence="4">
    <location>
        <begin position="63"/>
        <end position="66"/>
    </location>
</feature>
<feature type="helix" evidence="4">
    <location>
        <begin position="73"/>
        <end position="92"/>
    </location>
</feature>
<feature type="helix" evidence="4">
    <location>
        <begin position="97"/>
        <end position="99"/>
    </location>
</feature>
<feature type="helix" evidence="4">
    <location>
        <begin position="102"/>
        <end position="125"/>
    </location>
</feature>
<feature type="turn" evidence="4">
    <location>
        <begin position="129"/>
        <end position="131"/>
    </location>
</feature>
<feature type="helix" evidence="4">
    <location>
        <begin position="133"/>
        <end position="157"/>
    </location>
</feature>
<feature type="helix" evidence="4">
    <location>
        <begin position="162"/>
        <end position="178"/>
    </location>
</feature>
<feature type="helix" evidence="4">
    <location>
        <begin position="181"/>
        <end position="183"/>
    </location>
</feature>
<protein>
    <recommendedName>
        <fullName>Interferon alpha-8</fullName>
        <shortName>IFN-alpha-8</shortName>
    </recommendedName>
    <alternativeName>
        <fullName>Interferon alpha-B</fullName>
        <shortName>LeIF B</shortName>
    </alternativeName>
    <alternativeName>
        <fullName>Interferon alpha-B2</fullName>
    </alternativeName>
</protein>
<dbReference type="EMBL" id="X03125">
    <property type="protein sequence ID" value="CAA26903.1"/>
    <property type="molecule type" value="Genomic_DNA"/>
</dbReference>
<dbReference type="EMBL" id="K01900">
    <property type="protein sequence ID" value="AAA52716.1"/>
    <property type="molecule type" value="mRNA"/>
</dbReference>
<dbReference type="EMBL" id="V00545">
    <property type="protein sequence ID" value="CAA23806.1"/>
    <property type="molecule type" value="mRNA"/>
</dbReference>
<dbReference type="EMBL" id="V00550">
    <property type="protein sequence ID" value="CAA23811.1"/>
    <property type="molecule type" value="mRNA"/>
</dbReference>
<dbReference type="EMBL" id="AL353732">
    <property type="status" value="NOT_ANNOTATED_CDS"/>
    <property type="molecule type" value="Genomic_DNA"/>
</dbReference>
<dbReference type="EMBL" id="CH471071">
    <property type="protein sequence ID" value="EAW58610.1"/>
    <property type="molecule type" value="Genomic_DNA"/>
</dbReference>
<dbReference type="EMBL" id="BC104828">
    <property type="protein sequence ID" value="AAI04829.1"/>
    <property type="molecule type" value="mRNA"/>
</dbReference>
<dbReference type="EMBL" id="BC104830">
    <property type="protein sequence ID" value="AAI04831.1"/>
    <property type="molecule type" value="mRNA"/>
</dbReference>
<dbReference type="CCDS" id="CCDS6507.1"/>
<dbReference type="PIR" id="A93747">
    <property type="entry name" value="IVHUA4"/>
</dbReference>
<dbReference type="PIR" id="B61413">
    <property type="entry name" value="B61413"/>
</dbReference>
<dbReference type="PIR" id="D23753">
    <property type="entry name" value="IVHUI8"/>
</dbReference>
<dbReference type="RefSeq" id="NP_002161.2">
    <property type="nucleotide sequence ID" value="NM_002170.3"/>
</dbReference>
<dbReference type="PDB" id="6JHD">
    <property type="method" value="NMR"/>
    <property type="chains" value="A=24-189"/>
</dbReference>
<dbReference type="PDBsum" id="6JHD"/>
<dbReference type="SMR" id="P32881"/>
<dbReference type="BioGRID" id="109668">
    <property type="interactions" value="16"/>
</dbReference>
<dbReference type="ComplexPortal" id="CPX-6001">
    <property type="entry name" value="Interferon alpha receptor-ligand complex, IFNA8 variant"/>
</dbReference>
<dbReference type="DIP" id="DIP-6017N"/>
<dbReference type="FunCoup" id="P32881">
    <property type="interactions" value="949"/>
</dbReference>
<dbReference type="IntAct" id="P32881">
    <property type="interactions" value="11"/>
</dbReference>
<dbReference type="STRING" id="9606.ENSP00000369553"/>
<dbReference type="ChEMBL" id="CHEMBL3856161"/>
<dbReference type="GlyGen" id="P32881">
    <property type="glycosylation" value="1 site, 1 O-linked glycan (1 site)"/>
</dbReference>
<dbReference type="BioMuta" id="IFNA8"/>
<dbReference type="DMDM" id="417188"/>
<dbReference type="MassIVE" id="P32881"/>
<dbReference type="PaxDb" id="9606-ENSP00000369553"/>
<dbReference type="PeptideAtlas" id="P32881"/>
<dbReference type="ProteomicsDB" id="54886"/>
<dbReference type="ABCD" id="P32881">
    <property type="antibodies" value="3 sequenced antibodies"/>
</dbReference>
<dbReference type="Antibodypedia" id="24879">
    <property type="antibodies" value="130 antibodies from 22 providers"/>
</dbReference>
<dbReference type="DNASU" id="3445"/>
<dbReference type="Ensembl" id="ENST00000380205.2">
    <property type="protein sequence ID" value="ENSP00000369553.1"/>
    <property type="gene ID" value="ENSG00000120242.4"/>
</dbReference>
<dbReference type="GeneID" id="3445"/>
<dbReference type="KEGG" id="hsa:3445"/>
<dbReference type="MANE-Select" id="ENST00000380205.2">
    <property type="protein sequence ID" value="ENSP00000369553.1"/>
    <property type="RefSeq nucleotide sequence ID" value="NM_002170.4"/>
    <property type="RefSeq protein sequence ID" value="NP_002161.2"/>
</dbReference>
<dbReference type="UCSC" id="uc003zpc.1">
    <property type="organism name" value="human"/>
</dbReference>
<dbReference type="AGR" id="HGNC:5429"/>
<dbReference type="CTD" id="3445"/>
<dbReference type="DisGeNET" id="3445"/>
<dbReference type="GeneCards" id="IFNA8"/>
<dbReference type="HGNC" id="HGNC:5429">
    <property type="gene designation" value="IFNA8"/>
</dbReference>
<dbReference type="HPA" id="ENSG00000120242">
    <property type="expression patterns" value="Not detected"/>
</dbReference>
<dbReference type="MIM" id="147568">
    <property type="type" value="gene"/>
</dbReference>
<dbReference type="neXtProt" id="NX_P32881"/>
<dbReference type="OpenTargets" id="ENSG00000120242"/>
<dbReference type="PharmGKB" id="PA29668"/>
<dbReference type="PharmGKB" id="PA88"/>
<dbReference type="VEuPathDB" id="HostDB:ENSG00000120242"/>
<dbReference type="eggNOG" id="ENOG502SQAC">
    <property type="taxonomic scope" value="Eukaryota"/>
</dbReference>
<dbReference type="GeneTree" id="ENSGT01000000214430"/>
<dbReference type="HOGENOM" id="CLU_109427_0_0_1"/>
<dbReference type="InParanoid" id="P32881"/>
<dbReference type="OMA" id="TETHLMY"/>
<dbReference type="OrthoDB" id="8922121at2759"/>
<dbReference type="PAN-GO" id="P32881">
    <property type="GO annotations" value="12 GO annotations based on evolutionary models"/>
</dbReference>
<dbReference type="PhylomeDB" id="P32881"/>
<dbReference type="TreeFam" id="TF336177"/>
<dbReference type="PathwayCommons" id="P32881"/>
<dbReference type="Reactome" id="R-HSA-909733">
    <property type="pathway name" value="Interferon alpha/beta signaling"/>
</dbReference>
<dbReference type="Reactome" id="R-HSA-912694">
    <property type="pathway name" value="Regulation of IFNA/IFNB signaling"/>
</dbReference>
<dbReference type="Reactome" id="R-HSA-933541">
    <property type="pathway name" value="TRAF6 mediated IRF7 activation"/>
</dbReference>
<dbReference type="Reactome" id="R-HSA-9705671">
    <property type="pathway name" value="SARS-CoV-2 activates/modulates innate and adaptive immune responses"/>
</dbReference>
<dbReference type="Reactome" id="R-HSA-983231">
    <property type="pathway name" value="Factors involved in megakaryocyte development and platelet production"/>
</dbReference>
<dbReference type="Reactome" id="R-HSA-9833109">
    <property type="pathway name" value="Evasion by RSV of host interferon responses"/>
</dbReference>
<dbReference type="SignaLink" id="P32881"/>
<dbReference type="BioGRID-ORCS" id="3445">
    <property type="hits" value="10 hits in 1047 CRISPR screens"/>
</dbReference>
<dbReference type="ChiTaRS" id="IFNA8">
    <property type="organism name" value="human"/>
</dbReference>
<dbReference type="GeneWiki" id="IFNA8"/>
<dbReference type="GenomeRNAi" id="3445"/>
<dbReference type="Pharos" id="P32881">
    <property type="development level" value="Tbio"/>
</dbReference>
<dbReference type="PRO" id="PR:P32881"/>
<dbReference type="Proteomes" id="UP000005640">
    <property type="component" value="Chromosome 9"/>
</dbReference>
<dbReference type="RNAct" id="P32881">
    <property type="molecule type" value="protein"/>
</dbReference>
<dbReference type="Bgee" id="ENSG00000120242">
    <property type="expression patterns" value="Expressed in cerebellar cortex and 4 other cell types or tissues"/>
</dbReference>
<dbReference type="GO" id="GO:0005576">
    <property type="term" value="C:extracellular region"/>
    <property type="evidence" value="ECO:0000304"/>
    <property type="project" value="Reactome"/>
</dbReference>
<dbReference type="GO" id="GO:0005615">
    <property type="term" value="C:extracellular space"/>
    <property type="evidence" value="ECO:0000318"/>
    <property type="project" value="GO_Central"/>
</dbReference>
<dbReference type="GO" id="GO:0005125">
    <property type="term" value="F:cytokine activity"/>
    <property type="evidence" value="ECO:0000318"/>
    <property type="project" value="GO_Central"/>
</dbReference>
<dbReference type="GO" id="GO:0005126">
    <property type="term" value="F:cytokine receptor binding"/>
    <property type="evidence" value="ECO:0000304"/>
    <property type="project" value="ProtInc"/>
</dbReference>
<dbReference type="GO" id="GO:0005132">
    <property type="term" value="F:type I interferon receptor binding"/>
    <property type="evidence" value="ECO:0000318"/>
    <property type="project" value="GO_Central"/>
</dbReference>
<dbReference type="GO" id="GO:0002250">
    <property type="term" value="P:adaptive immune response"/>
    <property type="evidence" value="ECO:0000318"/>
    <property type="project" value="GO_Central"/>
</dbReference>
<dbReference type="GO" id="GO:0002312">
    <property type="term" value="P:B cell activation involved in immune response"/>
    <property type="evidence" value="ECO:0000318"/>
    <property type="project" value="GO_Central"/>
</dbReference>
<dbReference type="GO" id="GO:0098586">
    <property type="term" value="P:cellular response to virus"/>
    <property type="evidence" value="ECO:0000303"/>
    <property type="project" value="ComplexPortal"/>
</dbReference>
<dbReference type="GO" id="GO:0051607">
    <property type="term" value="P:defense response to virus"/>
    <property type="evidence" value="ECO:0007669"/>
    <property type="project" value="UniProtKB-KW"/>
</dbReference>
<dbReference type="GO" id="GO:0006959">
    <property type="term" value="P:humoral immune response"/>
    <property type="evidence" value="ECO:0000318"/>
    <property type="project" value="GO_Central"/>
</dbReference>
<dbReference type="GO" id="GO:0002323">
    <property type="term" value="P:natural killer cell activation involved in immune response"/>
    <property type="evidence" value="ECO:0000318"/>
    <property type="project" value="GO_Central"/>
</dbReference>
<dbReference type="GO" id="GO:0043330">
    <property type="term" value="P:response to exogenous dsRNA"/>
    <property type="evidence" value="ECO:0000318"/>
    <property type="project" value="GO_Central"/>
</dbReference>
<dbReference type="GO" id="GO:0002286">
    <property type="term" value="P:T cell activation involved in immune response"/>
    <property type="evidence" value="ECO:0000318"/>
    <property type="project" value="GO_Central"/>
</dbReference>
<dbReference type="GO" id="GO:0060337">
    <property type="term" value="P:type I interferon-mediated signaling pathway"/>
    <property type="evidence" value="ECO:0000318"/>
    <property type="project" value="GO_Central"/>
</dbReference>
<dbReference type="CDD" id="cd00095">
    <property type="entry name" value="IFab"/>
    <property type="match status" value="1"/>
</dbReference>
<dbReference type="FunFam" id="1.20.1250.10:FF:000001">
    <property type="entry name" value="Interferon alpha"/>
    <property type="match status" value="1"/>
</dbReference>
<dbReference type="Gene3D" id="1.20.1250.10">
    <property type="match status" value="1"/>
</dbReference>
<dbReference type="InterPro" id="IPR009079">
    <property type="entry name" value="4_helix_cytokine-like_core"/>
</dbReference>
<dbReference type="InterPro" id="IPR000471">
    <property type="entry name" value="Interferon_alpha/beta/delta"/>
</dbReference>
<dbReference type="PANTHER" id="PTHR11691:SF28">
    <property type="entry name" value="INTERFERON ALPHA-8"/>
    <property type="match status" value="1"/>
</dbReference>
<dbReference type="PANTHER" id="PTHR11691">
    <property type="entry name" value="TYPE I INTERFERON"/>
    <property type="match status" value="1"/>
</dbReference>
<dbReference type="Pfam" id="PF00143">
    <property type="entry name" value="Interferon"/>
    <property type="match status" value="1"/>
</dbReference>
<dbReference type="PRINTS" id="PR00266">
    <property type="entry name" value="INTERFERONAB"/>
</dbReference>
<dbReference type="SMART" id="SM00076">
    <property type="entry name" value="IFabd"/>
    <property type="match status" value="1"/>
</dbReference>
<dbReference type="SUPFAM" id="SSF47266">
    <property type="entry name" value="4-helical cytokines"/>
    <property type="match status" value="1"/>
</dbReference>
<dbReference type="PROSITE" id="PS00252">
    <property type="entry name" value="INTERFERON_A_B_D"/>
    <property type="match status" value="1"/>
</dbReference>
<gene>
    <name type="primary">IFNA8</name>
</gene>
<organism>
    <name type="scientific">Homo sapiens</name>
    <name type="common">Human</name>
    <dbReference type="NCBI Taxonomy" id="9606"/>
    <lineage>
        <taxon>Eukaryota</taxon>
        <taxon>Metazoa</taxon>
        <taxon>Chordata</taxon>
        <taxon>Craniata</taxon>
        <taxon>Vertebrata</taxon>
        <taxon>Euteleostomi</taxon>
        <taxon>Mammalia</taxon>
        <taxon>Eutheria</taxon>
        <taxon>Euarchontoglires</taxon>
        <taxon>Primates</taxon>
        <taxon>Haplorrhini</taxon>
        <taxon>Catarrhini</taxon>
        <taxon>Hominidae</taxon>
        <taxon>Homo</taxon>
    </lineage>
</organism>
<proteinExistence type="evidence at protein level"/>